<accession>Q2Y2M1</accession>
<comment type="function">
    <text evidence="1 2">Mediates the regulatory switch from transcription to RNA replication. Acts late in infection by inhibiting viral transcription and up-regulating RNA replication (By similarity). Plays a major role in antagonizing the type I IFN-mediated antiviral response. Interacts with host MAVS and prevents the interaction with its upstream partner RIGI in the signaling pathway leading to interferon production (By similarity).</text>
</comment>
<comment type="subunit">
    <text evidence="2">Interacts with host MAVS; this interaction inhibits signaling pathway leading to interferon production.</text>
</comment>
<comment type="subcellular location">
    <subcellularLocation>
        <location evidence="1">Host cytoplasm</location>
    </subcellularLocation>
</comment>
<comment type="similarity">
    <text evidence="3">Belongs to the metapneumovirus M2-2 protein family.</text>
</comment>
<proteinExistence type="inferred from homology"/>
<dbReference type="EMBL" id="DQ009484">
    <property type="protein sequence ID" value="AAY81659.1"/>
    <property type="molecule type" value="Viral_cRNA"/>
</dbReference>
<dbReference type="RefSeq" id="YP_443842.1">
    <property type="nucleotide sequence ID" value="NC_007652.1"/>
</dbReference>
<dbReference type="Proteomes" id="UP000002471">
    <property type="component" value="Segment"/>
</dbReference>
<dbReference type="GO" id="GO:0030430">
    <property type="term" value="C:host cell cytoplasm"/>
    <property type="evidence" value="ECO:0007669"/>
    <property type="project" value="UniProtKB-SubCell"/>
</dbReference>
<protein>
    <recommendedName>
        <fullName>Protein M2-2</fullName>
    </recommendedName>
</protein>
<organism>
    <name type="scientific">Avian metapneumovirus (isolate Canada goose/Minnesota/15a/2001)</name>
    <name type="common">AMPV</name>
    <dbReference type="NCBI Taxonomy" id="652954"/>
    <lineage>
        <taxon>Viruses</taxon>
        <taxon>Riboviria</taxon>
        <taxon>Orthornavirae</taxon>
        <taxon>Negarnaviricota</taxon>
        <taxon>Haploviricotina</taxon>
        <taxon>Monjiviricetes</taxon>
        <taxon>Mononegavirales</taxon>
        <taxon>Pneumoviridae</taxon>
        <taxon>Metapneumovirus</taxon>
        <taxon>Metapneumovirus avis</taxon>
    </lineage>
</organism>
<keyword id="KW-1035">Host cytoplasm</keyword>
<keyword id="KW-1185">Reference proteome</keyword>
<keyword id="KW-0693">Viral RNA replication</keyword>
<gene>
    <name type="primary">M2-2</name>
</gene>
<organismHost>
    <name type="scientific">Anser sp.</name>
    <name type="common">goose</name>
    <dbReference type="NCBI Taxonomy" id="8847"/>
</organismHost>
<organismHost>
    <name type="scientific">Meleagris gallopavo</name>
    <name type="common">Wild turkey</name>
    <dbReference type="NCBI Taxonomy" id="9103"/>
</organismHost>
<name>M22_AMPV1</name>
<evidence type="ECO:0000250" key="1">
    <source>
        <dbReference type="UniProtKB" id="P88812"/>
    </source>
</evidence>
<evidence type="ECO:0000250" key="2">
    <source>
        <dbReference type="UniProtKB" id="Q6WB96"/>
    </source>
</evidence>
<evidence type="ECO:0000305" key="3"/>
<sequence>MTLQLPCKIVQTLIKCGEHGLIFLKMKLDDMVWTKNELVDIISTEIVKVHANIFKCRLEDIEIIYVNTFLS</sequence>
<feature type="chain" id="PRO_0000390375" description="Protein M2-2">
    <location>
        <begin position="1"/>
        <end position="71"/>
    </location>
</feature>
<reference key="1">
    <citation type="journal article" date="2004" name="Avian Dis.">
        <title>Evidence of avian pneumovirus spread beyond Minnesota among wild and domestic birds in central North America.</title>
        <authorList>
            <person name="Bennett R.S."/>
            <person name="Nezworski J."/>
            <person name="Velayudhan B.T."/>
            <person name="Nagaraja K.V."/>
            <person name="Zeman D.H."/>
            <person name="Dyer N."/>
            <person name="Graham T."/>
            <person name="Lauer D.C."/>
            <person name="Njenga M.K."/>
            <person name="Halvorson D.A."/>
        </authorList>
    </citation>
    <scope>NUCLEOTIDE SEQUENCE [GENOMIC RNA]</scope>
</reference>
<reference key="2">
    <citation type="journal article" date="2005" name="J. Virol.">
        <title>A wild goose metapneumovirus containing a large attachment glycoprotein is avirulent but immunoprotective in domestic turkeys.</title>
        <authorList>
            <person name="Bennett R.S."/>
            <person name="LaRue R."/>
            <person name="Shaw D."/>
            <person name="Yu Q."/>
            <person name="Nagaraja K.V."/>
            <person name="Halvorson D.A."/>
            <person name="Njenga M.K."/>
        </authorList>
    </citation>
    <scope>NUCLEOTIDE SEQUENCE [GENOMIC RNA]</scope>
</reference>